<protein>
    <recommendedName>
        <fullName>Autoinducer 2 import system permease protein LsrC</fullName>
        <shortName>AI-2 import system permease protein LsrC</shortName>
    </recommendedName>
</protein>
<evidence type="ECO:0000250" key="1"/>
<evidence type="ECO:0000255" key="2"/>
<evidence type="ECO:0000305" key="3"/>
<proteinExistence type="inferred from homology"/>
<organism>
    <name type="scientific">Salmonella paratyphi B (strain ATCC BAA-1250 / SPB7)</name>
    <dbReference type="NCBI Taxonomy" id="1016998"/>
    <lineage>
        <taxon>Bacteria</taxon>
        <taxon>Pseudomonadati</taxon>
        <taxon>Pseudomonadota</taxon>
        <taxon>Gammaproteobacteria</taxon>
        <taxon>Enterobacterales</taxon>
        <taxon>Enterobacteriaceae</taxon>
        <taxon>Salmonella</taxon>
    </lineage>
</organism>
<keyword id="KW-0997">Cell inner membrane</keyword>
<keyword id="KW-1003">Cell membrane</keyword>
<keyword id="KW-0472">Membrane</keyword>
<keyword id="KW-0812">Transmembrane</keyword>
<keyword id="KW-1133">Transmembrane helix</keyword>
<keyword id="KW-0813">Transport</keyword>
<dbReference type="EMBL" id="CP000886">
    <property type="protein sequence ID" value="ABX70340.1"/>
    <property type="molecule type" value="Genomic_DNA"/>
</dbReference>
<dbReference type="KEGG" id="spq:SPAB_05049"/>
<dbReference type="PATRIC" id="fig|1016998.12.peg.4739"/>
<dbReference type="HOGENOM" id="CLU_028880_0_1_6"/>
<dbReference type="Proteomes" id="UP000008556">
    <property type="component" value="Chromosome"/>
</dbReference>
<dbReference type="GO" id="GO:0005886">
    <property type="term" value="C:plasma membrane"/>
    <property type="evidence" value="ECO:0007669"/>
    <property type="project" value="UniProtKB-SubCell"/>
</dbReference>
<dbReference type="GO" id="GO:0022857">
    <property type="term" value="F:transmembrane transporter activity"/>
    <property type="evidence" value="ECO:0007669"/>
    <property type="project" value="InterPro"/>
</dbReference>
<dbReference type="CDD" id="cd06579">
    <property type="entry name" value="TM_PBP1_transp_AraH_like"/>
    <property type="match status" value="1"/>
</dbReference>
<dbReference type="InterPro" id="IPR001851">
    <property type="entry name" value="ABC_transp_permease"/>
</dbReference>
<dbReference type="NCBIfam" id="NF011961">
    <property type="entry name" value="PRK15432.1"/>
    <property type="match status" value="1"/>
</dbReference>
<dbReference type="PANTHER" id="PTHR32196">
    <property type="entry name" value="ABC TRANSPORTER PERMEASE PROTEIN YPHD-RELATED-RELATED"/>
    <property type="match status" value="1"/>
</dbReference>
<dbReference type="PANTHER" id="PTHR32196:SF29">
    <property type="entry name" value="AUTOINDUCER 2 IMPORT SYSTEM PERMEASE PROTEIN LSRC"/>
    <property type="match status" value="1"/>
</dbReference>
<dbReference type="Pfam" id="PF02653">
    <property type="entry name" value="BPD_transp_2"/>
    <property type="match status" value="1"/>
</dbReference>
<feature type="chain" id="PRO_0000351348" description="Autoinducer 2 import system permease protein LsrC">
    <location>
        <begin position="1"/>
        <end position="346"/>
    </location>
</feature>
<feature type="transmembrane region" description="Helical" evidence="2">
    <location>
        <begin position="13"/>
        <end position="33"/>
    </location>
</feature>
<feature type="transmembrane region" description="Helical" evidence="2">
    <location>
        <begin position="38"/>
        <end position="58"/>
    </location>
</feature>
<feature type="transmembrane region" description="Helical" evidence="2">
    <location>
        <begin position="71"/>
        <end position="91"/>
    </location>
</feature>
<feature type="transmembrane region" description="Helical" evidence="2">
    <location>
        <begin position="92"/>
        <end position="112"/>
    </location>
</feature>
<feature type="transmembrane region" description="Helical" evidence="2">
    <location>
        <begin position="114"/>
        <end position="134"/>
    </location>
</feature>
<feature type="transmembrane region" description="Helical" evidence="2">
    <location>
        <begin position="154"/>
        <end position="174"/>
    </location>
</feature>
<feature type="transmembrane region" description="Helical" evidence="2">
    <location>
        <begin position="212"/>
        <end position="232"/>
    </location>
</feature>
<feature type="transmembrane region" description="Helical" evidence="2">
    <location>
        <begin position="248"/>
        <end position="268"/>
    </location>
</feature>
<feature type="transmembrane region" description="Helical" evidence="2">
    <location>
        <begin position="283"/>
        <end position="303"/>
    </location>
</feature>
<comment type="function">
    <text evidence="1">Part of the ABC transporter complex LsrABCD involved in autoinducer 2 (AI-2) import. Probably responsible for the translocation of the substrate across the membrane (By similarity).</text>
</comment>
<comment type="subunit">
    <text evidence="1">The complex is composed of two ATP-binding proteins (LsrA), two transmembrane proteins (LsrC and LsrD) and a solute-binding protein (LsrB).</text>
</comment>
<comment type="subcellular location">
    <subcellularLocation>
        <location evidence="1">Cell inner membrane</location>
        <topology evidence="1">Multi-pass membrane protein</topology>
    </subcellularLocation>
</comment>
<comment type="similarity">
    <text evidence="3">Belongs to the binding-protein-dependent transport system permease family. AraH/RbsC subfamily.</text>
</comment>
<name>LSRC_SALPB</name>
<sequence length="346" mass="36783">MKFIQNNREATALLAIVCLFVFPGALDSQYLSVQTLTMVFSSAQILMLLAIGATMVMLTRNIDVSVGSTTGMCAVLLGVMLNAGYSLPVACLATLILGIVAGFFNGVLVAWLKIPAIVATLGTLGLYRGIMLLWTGGKWIEGLPAGLKQLSAPVFLGISAIGWFTLVLALLMAWLLAKTAFGRNFYATGDNLQGARQLGVRTEMVRIMAFSLNGGMAALAGIVFASQIGFIPNQTGTGLEMKAIAACVLGGISLLGGSGTVIGAILGAYFLTQIDSVLVLLRIPAWWNDFIAGLVLLGVLVFDGRLRCALQRNLRRQKYARFISPPTPLQAEAKTHAQQNKNKEVA</sequence>
<gene>
    <name type="primary">lsrC</name>
    <name type="ordered locus">SPAB_05049</name>
</gene>
<reference key="1">
    <citation type="submission" date="2007-11" db="EMBL/GenBank/DDBJ databases">
        <authorList>
            <consortium name="The Salmonella enterica serovar Paratyphi B Genome Sequencing Project"/>
            <person name="McClelland M."/>
            <person name="Sanderson E.K."/>
            <person name="Porwollik S."/>
            <person name="Spieth J."/>
            <person name="Clifton W.S."/>
            <person name="Fulton R."/>
            <person name="Cordes M."/>
            <person name="Wollam A."/>
            <person name="Shah N."/>
            <person name="Pepin K."/>
            <person name="Bhonagiri V."/>
            <person name="Nash W."/>
            <person name="Johnson M."/>
            <person name="Thiruvilangam P."/>
            <person name="Wilson R."/>
        </authorList>
    </citation>
    <scope>NUCLEOTIDE SEQUENCE [LARGE SCALE GENOMIC DNA]</scope>
    <source>
        <strain>ATCC BAA-1250 / SPB7</strain>
    </source>
</reference>
<accession>A9MZG2</accession>